<reference key="1">
    <citation type="submission" date="2003-03" db="EMBL/GenBank/DDBJ databases">
        <title>African swine fever virus genomes.</title>
        <authorList>
            <person name="Kutish G.F."/>
            <person name="Rock D.L."/>
        </authorList>
    </citation>
    <scope>NUCLEOTIDE SEQUENCE [LARGE SCALE GENOMIC DNA]</scope>
</reference>
<name>P54_ASFWA</name>
<evidence type="ECO:0000250" key="1">
    <source>
        <dbReference type="UniProtKB" id="Q65194"/>
    </source>
</evidence>
<evidence type="ECO:0000255" key="2"/>
<evidence type="ECO:0000256" key="3">
    <source>
        <dbReference type="SAM" id="MobiDB-lite"/>
    </source>
</evidence>
<evidence type="ECO:0000305" key="4"/>
<feature type="chain" id="PRO_0000373420" description="Inner membrane protein p54">
    <location>
        <begin position="1"/>
        <end position="193"/>
    </location>
</feature>
<feature type="transmembrane region" description="Helical" evidence="2">
    <location>
        <begin position="32"/>
        <end position="52"/>
    </location>
</feature>
<feature type="repeat" description="1">
    <location>
        <begin position="135"/>
        <end position="138"/>
    </location>
</feature>
<feature type="repeat" description="2">
    <location>
        <begin position="139"/>
        <end position="142"/>
    </location>
</feature>
<feature type="repeat" description="3">
    <location>
        <begin position="143"/>
        <end position="146"/>
    </location>
</feature>
<feature type="repeat" description="4">
    <location>
        <begin position="147"/>
        <end position="150"/>
    </location>
</feature>
<feature type="region of interest" description="Disordered" evidence="3">
    <location>
        <begin position="84"/>
        <end position="126"/>
    </location>
</feature>
<feature type="region of interest" description="4 X 4 AA tandem repeats of A-A-A-S">
    <location>
        <begin position="135"/>
        <end position="150"/>
    </location>
</feature>
<feature type="region of interest" description="Interaction with host DYNLL1" evidence="1">
    <location>
        <begin position="159"/>
        <end position="171"/>
    </location>
</feature>
<keyword id="KW-0053">Apoptosis</keyword>
<keyword id="KW-1176">Cytoplasmic inwards viral transport</keyword>
<keyword id="KW-1035">Host cytoplasm</keyword>
<keyword id="KW-1037">Host cytoskeleton</keyword>
<keyword id="KW-1038">Host endoplasmic reticulum</keyword>
<keyword id="KW-1043">Host membrane</keyword>
<keyword id="KW-0945">Host-virus interaction</keyword>
<keyword id="KW-0426">Late protein</keyword>
<keyword id="KW-0472">Membrane</keyword>
<keyword id="KW-1177">Microtubular inwards viral transport</keyword>
<keyword id="KW-0677">Repeat</keyword>
<keyword id="KW-0812">Transmembrane</keyword>
<keyword id="KW-1133">Transmembrane helix</keyword>
<keyword id="KW-0261">Viral envelope protein</keyword>
<keyword id="KW-0946">Virion</keyword>
<keyword id="KW-1160">Virus entry into host cell</keyword>
<comment type="function">
    <text evidence="1">Inner envelope protein involved, through its interaction with host dynein, in the intracellular microtubule-dependent transport of viral capsid toward viral factories (By similarity). Seems to induce caspase-3 activation and apoptosis (By similarity). Plays a role in virion morphogenesis by recruiting and transforming the host ER membranes into the precursors of the viral envelope (By similarity). Involved in virus attachment to the host cell (By similarity).</text>
</comment>
<comment type="subunit">
    <text evidence="1">Interacts with the host light chain cytoplasmic dynein DYNLL1; this interaction is critical for intracellular microtubule-dependent virus transport toward viral factories.</text>
</comment>
<comment type="subcellular location">
    <subcellularLocation>
        <location evidence="1">Virion membrane</location>
        <topology evidence="1">Single-pass membrane protein</topology>
    </subcellularLocation>
    <subcellularLocation>
        <location evidence="1">Host cytoplasm</location>
        <location evidence="1">Host cytoskeleton</location>
    </subcellularLocation>
    <subcellularLocation>
        <location evidence="1">Host endoplasmic reticulum membrane</location>
    </subcellularLocation>
    <text evidence="1">Detected mainly on membrane-like structures within viral factories. Present in mature extracellular virions. Host DYNLL1 and viral p54 interact at the microtubular organizing center (By similarity). Found in the inner envelope of the virus (By similarity).</text>
</comment>
<comment type="induction">
    <text evidence="4">Expressed in the late phase of the viral replicative cycle.</text>
</comment>
<comment type="similarity">
    <text evidence="4">Belongs to the asfivirus envelope protein p54 family.</text>
</comment>
<proteinExistence type="inferred from homology"/>
<protein>
    <recommendedName>
        <fullName evidence="1">Inner membrane protein p54</fullName>
    </recommendedName>
    <alternativeName>
        <fullName evidence="1">pE183L</fullName>
    </alternativeName>
</protein>
<organismHost>
    <name type="scientific">Ornithodoros</name>
    <name type="common">relapsing fever ticks</name>
    <dbReference type="NCBI Taxonomy" id="6937"/>
</organismHost>
<organismHost>
    <name type="scientific">Phacochoerus aethiopicus</name>
    <name type="common">Warthog</name>
    <dbReference type="NCBI Taxonomy" id="85517"/>
</organismHost>
<organismHost>
    <name type="scientific">Phacochoerus africanus</name>
    <name type="common">Warthog</name>
    <dbReference type="NCBI Taxonomy" id="41426"/>
</organismHost>
<organismHost>
    <name type="scientific">Potamochoerus larvatus</name>
    <name type="common">Bushpig</name>
    <dbReference type="NCBI Taxonomy" id="273792"/>
</organismHost>
<organismHost>
    <name type="scientific">Sus scrofa</name>
    <name type="common">Pig</name>
    <dbReference type="NCBI Taxonomy" id="9823"/>
</organismHost>
<sequence length="193" mass="20637">MDSEFFQPVYPRHYGECLSPVSTPSFFSTHMYTILIAIVVLVIIIIVLIYLFSSRKKKAAAAIEEEDIQFINPYQDQQWVEVTPQPGTSKPAGATTASVGKPVTGRPATNRPVTDRPATNNPVTDRLVMATGGPAAASAAASAAASAAASAPAHPAEPYTTVTTQNTASQTMSAIENLRQRSTYTHKDLENSL</sequence>
<dbReference type="EMBL" id="AY261366">
    <property type="status" value="NOT_ANNOTATED_CDS"/>
    <property type="molecule type" value="Genomic_DNA"/>
</dbReference>
<dbReference type="SMR" id="P0CA00"/>
<dbReference type="Proteomes" id="UP000000858">
    <property type="component" value="Segment"/>
</dbReference>
<dbReference type="GO" id="GO:0043657">
    <property type="term" value="C:host cell"/>
    <property type="evidence" value="ECO:0007669"/>
    <property type="project" value="GOC"/>
</dbReference>
<dbReference type="GO" id="GO:0044167">
    <property type="term" value="C:host cell endoplasmic reticulum membrane"/>
    <property type="evidence" value="ECO:0007669"/>
    <property type="project" value="UniProtKB-SubCell"/>
</dbReference>
<dbReference type="GO" id="GO:0044163">
    <property type="term" value="C:host cytoskeleton"/>
    <property type="evidence" value="ECO:0007669"/>
    <property type="project" value="UniProtKB-SubCell"/>
</dbReference>
<dbReference type="GO" id="GO:0016020">
    <property type="term" value="C:membrane"/>
    <property type="evidence" value="ECO:0007669"/>
    <property type="project" value="UniProtKB-KW"/>
</dbReference>
<dbReference type="GO" id="GO:0019031">
    <property type="term" value="C:viral envelope"/>
    <property type="evidence" value="ECO:0007669"/>
    <property type="project" value="UniProtKB-KW"/>
</dbReference>
<dbReference type="GO" id="GO:0055036">
    <property type="term" value="C:virion membrane"/>
    <property type="evidence" value="ECO:0007669"/>
    <property type="project" value="UniProtKB-SubCell"/>
</dbReference>
<dbReference type="GO" id="GO:0075521">
    <property type="term" value="P:microtubule-dependent intracellular transport of viral material towards nucleus"/>
    <property type="evidence" value="ECO:0007669"/>
    <property type="project" value="UniProtKB-KW"/>
</dbReference>
<dbReference type="GO" id="GO:0046718">
    <property type="term" value="P:symbiont entry into host cell"/>
    <property type="evidence" value="ECO:0007669"/>
    <property type="project" value="UniProtKB-KW"/>
</dbReference>
<dbReference type="InterPro" id="IPR008385">
    <property type="entry name" value="ASFV_p54"/>
</dbReference>
<dbReference type="Pfam" id="PF05568">
    <property type="entry name" value="ASFV_J13L"/>
    <property type="match status" value="1"/>
</dbReference>
<gene>
    <name type="ordered locus">War-136</name>
</gene>
<accession>P0CA00</accession>
<organism>
    <name type="scientific">African swine fever virus (isolate Warthog/Namibia/Wart80/1980)</name>
    <name type="common">ASFV</name>
    <dbReference type="NCBI Taxonomy" id="561444"/>
    <lineage>
        <taxon>Viruses</taxon>
        <taxon>Varidnaviria</taxon>
        <taxon>Bamfordvirae</taxon>
        <taxon>Nucleocytoviricota</taxon>
        <taxon>Pokkesviricetes</taxon>
        <taxon>Asfuvirales</taxon>
        <taxon>Asfarviridae</taxon>
        <taxon>Asfivirus</taxon>
        <taxon>African swine fever virus</taxon>
    </lineage>
</organism>